<feature type="chain" id="PRO_0000148172" description="Uncharacterized protein C09E9.1">
    <location>
        <begin position="1"/>
        <end position="123"/>
    </location>
</feature>
<feature type="region of interest" description="Disordered" evidence="1">
    <location>
        <begin position="1"/>
        <end position="28"/>
    </location>
</feature>
<feature type="compositionally biased region" description="Basic and acidic residues" evidence="1">
    <location>
        <begin position="7"/>
        <end position="20"/>
    </location>
</feature>
<accession>Q93196</accession>
<accession>A4F300</accession>
<gene>
    <name type="ORF">C09E9.1</name>
</gene>
<comment type="similarity">
    <text evidence="2">Belongs to the TUSC2 family.</text>
</comment>
<sequence length="123" mass="14237">MGLGSSKRKEEPPHKSEPKTVGRVKRAGARPDEMIAKYAEVLKTRGILPEYFLVHEAKSSQYIDEDGDVANEFYQETMSDGEKRRLCRLMKNLRPKGKERYAIPRLKHDIPVVIWEVQQPQET</sequence>
<dbReference type="EMBL" id="FO080470">
    <property type="protein sequence ID" value="CCD63946.1"/>
    <property type="molecule type" value="Genomic_DNA"/>
</dbReference>
<dbReference type="PIR" id="T19122">
    <property type="entry name" value="T19122"/>
</dbReference>
<dbReference type="RefSeq" id="NP_741315.1">
    <property type="nucleotide sequence ID" value="NM_171266.6"/>
</dbReference>
<dbReference type="FunCoup" id="Q93196">
    <property type="interactions" value="806"/>
</dbReference>
<dbReference type="PaxDb" id="6239-C09E9.1a"/>
<dbReference type="PeptideAtlas" id="Q93196"/>
<dbReference type="EnsemblMetazoa" id="C09E9.1a.1">
    <property type="protein sequence ID" value="C09E9.1a.1"/>
    <property type="gene ID" value="WBGene00007476"/>
</dbReference>
<dbReference type="GeneID" id="182452"/>
<dbReference type="KEGG" id="cel:CELE_C09E9.1"/>
<dbReference type="UCSC" id="C09E9.1.1">
    <property type="organism name" value="c. elegans"/>
</dbReference>
<dbReference type="AGR" id="WB:WBGene00007476"/>
<dbReference type="CTD" id="182452"/>
<dbReference type="WormBase" id="C09E9.1a">
    <property type="protein sequence ID" value="CE08036"/>
    <property type="gene ID" value="WBGene00007476"/>
</dbReference>
<dbReference type="eggNOG" id="ENOG502S21H">
    <property type="taxonomic scope" value="Eukaryota"/>
</dbReference>
<dbReference type="HOGENOM" id="CLU_2028822_0_0_1"/>
<dbReference type="InParanoid" id="Q93196"/>
<dbReference type="OMA" id="YAIPRLK"/>
<dbReference type="OrthoDB" id="9025707at2759"/>
<dbReference type="PhylomeDB" id="Q93196"/>
<dbReference type="PRO" id="PR:Q93196"/>
<dbReference type="Proteomes" id="UP000001940">
    <property type="component" value="Chromosome IV"/>
</dbReference>
<dbReference type="Bgee" id="WBGene00007476">
    <property type="expression patterns" value="Expressed in pharyngeal muscle cell (C elegans) and 4 other cell types or tissues"/>
</dbReference>
<dbReference type="ExpressionAtlas" id="Q93196">
    <property type="expression patterns" value="baseline and differential"/>
</dbReference>
<dbReference type="GO" id="GO:0005739">
    <property type="term" value="C:mitochondrion"/>
    <property type="evidence" value="ECO:0000318"/>
    <property type="project" value="GO_Central"/>
</dbReference>
<dbReference type="GO" id="GO:0051881">
    <property type="term" value="P:regulation of mitochondrial membrane potential"/>
    <property type="evidence" value="ECO:0000318"/>
    <property type="project" value="GO_Central"/>
</dbReference>
<dbReference type="InterPro" id="IPR029393">
    <property type="entry name" value="FUS1"/>
</dbReference>
<dbReference type="PANTHER" id="PTHR15453">
    <property type="entry name" value="TUMOR SUPPRESSOR CANDIDATE 2"/>
    <property type="match status" value="1"/>
</dbReference>
<dbReference type="PANTHER" id="PTHR15453:SF8">
    <property type="entry name" value="TUMOR SUPPRESSOR CANDIDATE 2"/>
    <property type="match status" value="1"/>
</dbReference>
<dbReference type="Pfam" id="PF15000">
    <property type="entry name" value="TUSC2"/>
    <property type="match status" value="1"/>
</dbReference>
<keyword id="KW-1185">Reference proteome</keyword>
<organism>
    <name type="scientific">Caenorhabditis elegans</name>
    <dbReference type="NCBI Taxonomy" id="6239"/>
    <lineage>
        <taxon>Eukaryota</taxon>
        <taxon>Metazoa</taxon>
        <taxon>Ecdysozoa</taxon>
        <taxon>Nematoda</taxon>
        <taxon>Chromadorea</taxon>
        <taxon>Rhabditida</taxon>
        <taxon>Rhabditina</taxon>
        <taxon>Rhabditomorpha</taxon>
        <taxon>Rhabditoidea</taxon>
        <taxon>Rhabditidae</taxon>
        <taxon>Peloderinae</taxon>
        <taxon>Caenorhabditis</taxon>
    </lineage>
</organism>
<evidence type="ECO:0000256" key="1">
    <source>
        <dbReference type="SAM" id="MobiDB-lite"/>
    </source>
</evidence>
<evidence type="ECO:0000305" key="2"/>
<proteinExistence type="inferred from homology"/>
<name>YI31_CAEEL</name>
<reference key="1">
    <citation type="journal article" date="1998" name="Science">
        <title>Genome sequence of the nematode C. elegans: a platform for investigating biology.</title>
        <authorList>
            <consortium name="The C. elegans sequencing consortium"/>
        </authorList>
    </citation>
    <scope>NUCLEOTIDE SEQUENCE [LARGE SCALE GENOMIC DNA]</scope>
    <source>
        <strain>Bristol N2</strain>
    </source>
</reference>
<protein>
    <recommendedName>
        <fullName>Uncharacterized protein C09E9.1</fullName>
    </recommendedName>
</protein>